<organism>
    <name type="scientific">Bos taurus</name>
    <name type="common">Bovine</name>
    <dbReference type="NCBI Taxonomy" id="9913"/>
    <lineage>
        <taxon>Eukaryota</taxon>
        <taxon>Metazoa</taxon>
        <taxon>Chordata</taxon>
        <taxon>Craniata</taxon>
        <taxon>Vertebrata</taxon>
        <taxon>Euteleostomi</taxon>
        <taxon>Mammalia</taxon>
        <taxon>Eutheria</taxon>
        <taxon>Laurasiatheria</taxon>
        <taxon>Artiodactyla</taxon>
        <taxon>Ruminantia</taxon>
        <taxon>Pecora</taxon>
        <taxon>Bovidae</taxon>
        <taxon>Bovinae</taxon>
        <taxon>Bos</taxon>
    </lineage>
</organism>
<gene>
    <name evidence="2" type="primary">FCGR3A</name>
    <name type="synonym">FCGR3</name>
    <name evidence="7" type="synonym">FCGRIII</name>
</gene>
<dbReference type="EMBL" id="X99695">
    <property type="protein sequence ID" value="CAA68026.1"/>
    <property type="molecule type" value="Genomic_DNA"/>
</dbReference>
<dbReference type="EMBL" id="BC112756">
    <property type="protein sequence ID" value="AAI12757.1"/>
    <property type="molecule type" value="mRNA"/>
</dbReference>
<dbReference type="RefSeq" id="NP_001070870.1">
    <property type="nucleotide sequence ID" value="NM_001077402.1"/>
</dbReference>
<dbReference type="SMR" id="P79107"/>
<dbReference type="FunCoup" id="P79107">
    <property type="interactions" value="442"/>
</dbReference>
<dbReference type="STRING" id="9913.ENSBTAP00000069304"/>
<dbReference type="GlyCosmos" id="P79107">
    <property type="glycosylation" value="3 sites, No reported glycans"/>
</dbReference>
<dbReference type="GlyGen" id="P79107">
    <property type="glycosylation" value="3 sites"/>
</dbReference>
<dbReference type="PaxDb" id="9913-ENSBTAP00000033639"/>
<dbReference type="Ensembl" id="ENSBTAT00000033730.6">
    <property type="protein sequence ID" value="ENSBTAP00000033639.4"/>
    <property type="gene ID" value="ENSBTAG00000002096.7"/>
</dbReference>
<dbReference type="GeneID" id="281766"/>
<dbReference type="KEGG" id="bta:281766"/>
<dbReference type="CTD" id="2214"/>
<dbReference type="VEuPathDB" id="HostDB:ENSBTAG00000002096"/>
<dbReference type="eggNOG" id="ENOG502RU1M">
    <property type="taxonomic scope" value="Eukaryota"/>
</dbReference>
<dbReference type="GeneTree" id="ENSGT01050000244808"/>
<dbReference type="HOGENOM" id="CLU_023383_1_0_1"/>
<dbReference type="InParanoid" id="P79107"/>
<dbReference type="OMA" id="GDNSTQW"/>
<dbReference type="OrthoDB" id="8917564at2759"/>
<dbReference type="TreeFam" id="TF335097"/>
<dbReference type="Reactome" id="R-BTA-163125">
    <property type="pathway name" value="Post-translational modification: synthesis of GPI-anchored proteins"/>
</dbReference>
<dbReference type="Reactome" id="R-BTA-2029481">
    <property type="pathway name" value="FCGR activation"/>
</dbReference>
<dbReference type="Reactome" id="R-BTA-2029482">
    <property type="pathway name" value="Regulation of actin dynamics for phagocytic cup formation"/>
</dbReference>
<dbReference type="Reactome" id="R-BTA-2029485">
    <property type="pathway name" value="Role of phospholipids in phagocytosis"/>
</dbReference>
<dbReference type="Reactome" id="R-BTA-6798695">
    <property type="pathway name" value="Neutrophil degranulation"/>
</dbReference>
<dbReference type="Proteomes" id="UP000009136">
    <property type="component" value="Chromosome 3"/>
</dbReference>
<dbReference type="Bgee" id="ENSBTAG00000002096">
    <property type="expression patterns" value="Expressed in lung and 104 other cell types or tissues"/>
</dbReference>
<dbReference type="GO" id="GO:0009897">
    <property type="term" value="C:external side of plasma membrane"/>
    <property type="evidence" value="ECO:0000318"/>
    <property type="project" value="GO_Central"/>
</dbReference>
<dbReference type="GO" id="GO:0019767">
    <property type="term" value="F:IgE receptor activity"/>
    <property type="evidence" value="ECO:0007669"/>
    <property type="project" value="Ensembl"/>
</dbReference>
<dbReference type="GO" id="GO:0019864">
    <property type="term" value="F:IgG binding"/>
    <property type="evidence" value="ECO:0007669"/>
    <property type="project" value="UniProtKB-KW"/>
</dbReference>
<dbReference type="GO" id="GO:0019770">
    <property type="term" value="F:IgG receptor activity"/>
    <property type="evidence" value="ECO:0000318"/>
    <property type="project" value="GO_Central"/>
</dbReference>
<dbReference type="GO" id="GO:0001788">
    <property type="term" value="P:antibody-dependent cellular cytotoxicity"/>
    <property type="evidence" value="ECO:0000318"/>
    <property type="project" value="GO_Central"/>
</dbReference>
<dbReference type="GO" id="GO:0007166">
    <property type="term" value="P:cell surface receptor signaling pathway"/>
    <property type="evidence" value="ECO:0000318"/>
    <property type="project" value="GO_Central"/>
</dbReference>
<dbReference type="GO" id="GO:0002468">
    <property type="term" value="P:dendritic cell antigen processing and presentation"/>
    <property type="evidence" value="ECO:0007669"/>
    <property type="project" value="Ensembl"/>
</dbReference>
<dbReference type="GO" id="GO:0160006">
    <property type="term" value="P:Fc receptor-mediated immune complex endocytosis"/>
    <property type="evidence" value="ECO:0007669"/>
    <property type="project" value="Ensembl"/>
</dbReference>
<dbReference type="GO" id="GO:0042119">
    <property type="term" value="P:neutrophil activation"/>
    <property type="evidence" value="ECO:0007669"/>
    <property type="project" value="Ensembl"/>
</dbReference>
<dbReference type="GO" id="GO:0045780">
    <property type="term" value="P:positive regulation of bone resorption"/>
    <property type="evidence" value="ECO:0007669"/>
    <property type="project" value="Ensembl"/>
</dbReference>
<dbReference type="CDD" id="cd05752">
    <property type="entry name" value="Ig1_FcgammaR_like"/>
    <property type="match status" value="1"/>
</dbReference>
<dbReference type="CDD" id="cd05753">
    <property type="entry name" value="Ig2_FcgammaR_like"/>
    <property type="match status" value="1"/>
</dbReference>
<dbReference type="FunFam" id="2.60.40.10:FF:000217">
    <property type="entry name" value="High affinity immunoglobulin gamma Fc receptor I"/>
    <property type="match status" value="1"/>
</dbReference>
<dbReference type="FunFam" id="2.60.40.10:FF:000356">
    <property type="entry name" value="Low affinity immunoglobulin gamma Fc region receptor III-A"/>
    <property type="match status" value="1"/>
</dbReference>
<dbReference type="Gene3D" id="2.60.40.10">
    <property type="entry name" value="Immunoglobulins"/>
    <property type="match status" value="2"/>
</dbReference>
<dbReference type="InterPro" id="IPR007110">
    <property type="entry name" value="Ig-like_dom"/>
</dbReference>
<dbReference type="InterPro" id="IPR036179">
    <property type="entry name" value="Ig-like_dom_sf"/>
</dbReference>
<dbReference type="InterPro" id="IPR013783">
    <property type="entry name" value="Ig-like_fold"/>
</dbReference>
<dbReference type="InterPro" id="IPR050488">
    <property type="entry name" value="Ig_Fc_receptor"/>
</dbReference>
<dbReference type="InterPro" id="IPR003599">
    <property type="entry name" value="Ig_sub"/>
</dbReference>
<dbReference type="PANTHER" id="PTHR11481">
    <property type="entry name" value="IMMUNOGLOBULIN FC RECEPTOR"/>
    <property type="match status" value="1"/>
</dbReference>
<dbReference type="PANTHER" id="PTHR11481:SF103">
    <property type="entry name" value="LOW AFFINITY IMMUNOGLOBULIN GAMMA FC REGION RECEPTOR III-A-RELATED"/>
    <property type="match status" value="1"/>
</dbReference>
<dbReference type="Pfam" id="PF13895">
    <property type="entry name" value="Ig_2"/>
    <property type="match status" value="2"/>
</dbReference>
<dbReference type="SMART" id="SM00409">
    <property type="entry name" value="IG"/>
    <property type="match status" value="2"/>
</dbReference>
<dbReference type="SUPFAM" id="SSF48726">
    <property type="entry name" value="Immunoglobulin"/>
    <property type="match status" value="2"/>
</dbReference>
<dbReference type="PROSITE" id="PS50835">
    <property type="entry name" value="IG_LIKE"/>
    <property type="match status" value="2"/>
</dbReference>
<comment type="function">
    <text evidence="1 2 3">Receptor for the invariable Fc fragment of immunoglobulin gamma (IgG). Optimally activated upon binding of clustered antigen-IgG complexes displayed on cell surfaces, triggers lysis of antibody-coated cells, a process known as antibody-dependent cellular cytotoxicity (ADCC). Does not bind free monomeric IgG, thus avoiding inappropriate effector cell activation in the absence of antigenic trigger (By similarity). Mediates IgG effector functions on natural killer (NK) cells. Binds antigen-IgG complexes generated upon infection and triggers NK cell-dependent cytokine production and degranulation to limit viral load and propagation (By similarity). Fc-binding subunit that associates with FCER1G adapters to form functional signaling complexes. Following the engagement of antigen-IgG complexes, triggers phosphorylation of immunoreceptor tyrosine-based activation motif (ITAM)-containing adapter with subsequent activation of phosphatidylinositol 3-kinase signaling and sustained elevation of intracellular calcium that ultimately drive NK cell activation (By similarity). Mediates enhanced ADCC in response to afucosylated IgGs (By similarity).</text>
</comment>
<comment type="subunit">
    <text evidence="2">Forms a heterooligomeric complex with ITAM-containing signaling subunits FCER1G. Interacts (via transmembrane domain) with signaling subunits; this interaction is a prerequisite for receptor complex expression on the cell surface and intracellular signal transduction. Binds the Fc region of antigen-complexed IgG.</text>
</comment>
<comment type="subcellular location">
    <subcellularLocation>
        <location evidence="2">Cell membrane</location>
        <topology evidence="4">Single-pass membrane protein</topology>
    </subcellularLocation>
</comment>
<comment type="tissue specificity">
    <text evidence="6">Expressed in gamma-delta T cells.</text>
</comment>
<comment type="caution">
    <text evidence="8">It is not sure if the variants are due to different alleles or to the existence of at least two genes.</text>
</comment>
<reference key="1">
    <citation type="journal article" date="1997" name="Immunogenetics">
        <title>Nucleotide sequence of cattle FcGRIII: its identification in gammadelta T cells.</title>
        <authorList>
            <person name="Collins R.A."/>
            <person name="Gelder K.I."/>
            <person name="Howard C.J."/>
        </authorList>
    </citation>
    <scope>NUCLEOTIDE SEQUENCE [GENOMIC DNA]</scope>
    <scope>VARIANTS PRO-11; VAL-12; ARG-46; ASP-107; VAL-114 AND ILE-229</scope>
    <source>
        <tissue>Lymph node</tissue>
    </source>
</reference>
<reference key="2">
    <citation type="submission" date="2006-01" db="EMBL/GenBank/DDBJ databases">
        <authorList>
            <person name="Moore S."/>
            <person name="Alexander L."/>
            <person name="Brownstein M."/>
            <person name="Guan L."/>
            <person name="Lobo S."/>
            <person name="Meng Y."/>
            <person name="Tanaguchi M."/>
            <person name="Wang Z."/>
            <person name="Yu J."/>
            <person name="Prange C."/>
            <person name="Schreiber K."/>
            <person name="Shenmen C."/>
            <person name="Wagner L."/>
            <person name="Bala M."/>
            <person name="Barbazuk S."/>
            <person name="Barber S."/>
            <person name="Babakaiff R."/>
            <person name="Beland J."/>
            <person name="Chun E."/>
            <person name="Del Rio L."/>
            <person name="Gibson S."/>
            <person name="Hanson R."/>
            <person name="Kirkpatrick R."/>
            <person name="Liu J."/>
            <person name="Matsuo C."/>
            <person name="Mayo M."/>
            <person name="Santos R.R."/>
            <person name="Stott J."/>
            <person name="Tsai M."/>
            <person name="Wong D."/>
            <person name="Siddiqui A."/>
            <person name="Holt R."/>
            <person name="Jones S.J."/>
            <person name="Marra M.A."/>
        </authorList>
    </citation>
    <scope>NUCLEOTIDE SEQUENCE [LARGE SCALE MRNA]</scope>
    <source>
        <strain>Hereford</strain>
        <tissue>Heart ventricle</tissue>
    </source>
</reference>
<reference key="3">
    <citation type="submission" date="2005-08" db="EMBL/GenBank/DDBJ databases">
        <authorList>
            <consortium name="NIH - Mammalian Gene Collection (MGC) project"/>
        </authorList>
    </citation>
    <scope>NUCLEOTIDE SEQUENCE [LARGE SCALE MRNA]</scope>
    <source>
        <strain>Hereford</strain>
        <tissue>Heart ventricle</tissue>
    </source>
</reference>
<reference key="4">
    <citation type="journal article" date="1994" name="Bull. World Health Organ.">
        <title>Nomenclature of Fc receptors. IUIS/WHO Subcommittee on Nomenclature of Fc receptors.</title>
        <authorList>
            <person name="Conrad D."/>
            <person name="Cooper M."/>
            <person name="Fridman W.H."/>
            <person name="Kinet J.P."/>
            <person name="Ravetch J."/>
        </authorList>
    </citation>
    <scope>NOMENCLATURE</scope>
</reference>
<keyword id="KW-1003">Cell membrane</keyword>
<keyword id="KW-1015">Disulfide bond</keyword>
<keyword id="KW-0325">Glycoprotein</keyword>
<keyword id="KW-0390">IgG-binding protein</keyword>
<keyword id="KW-0393">Immunoglobulin domain</keyword>
<keyword id="KW-0472">Membrane</keyword>
<keyword id="KW-0675">Receptor</keyword>
<keyword id="KW-1185">Reference proteome</keyword>
<keyword id="KW-0677">Repeat</keyword>
<keyword id="KW-0732">Signal</keyword>
<keyword id="KW-0812">Transmembrane</keyword>
<keyword id="KW-1133">Transmembrane helix</keyword>
<evidence type="ECO:0000250" key="1">
    <source>
        <dbReference type="UniProtKB" id="A0A0B4J1G0"/>
    </source>
</evidence>
<evidence type="ECO:0000250" key="2">
    <source>
        <dbReference type="UniProtKB" id="P08637"/>
    </source>
</evidence>
<evidence type="ECO:0000250" key="3">
    <source>
        <dbReference type="UniProtKB" id="Q28942"/>
    </source>
</evidence>
<evidence type="ECO:0000255" key="4"/>
<evidence type="ECO:0000255" key="5">
    <source>
        <dbReference type="PROSITE-ProRule" id="PRU00114"/>
    </source>
</evidence>
<evidence type="ECO:0000269" key="6">
    <source>
    </source>
</evidence>
<evidence type="ECO:0000303" key="7">
    <source>
    </source>
</evidence>
<evidence type="ECO:0000305" key="8"/>
<name>FCG3A_BOVIN</name>
<accession>P79107</accession>
<accession>F1N286</accession>
<accession>Q2KI63</accession>
<proteinExistence type="evidence at transcript level"/>
<feature type="signal peptide" evidence="4">
    <location>
        <begin position="1"/>
        <end position="16"/>
    </location>
</feature>
<feature type="chain" id="PRO_0000015149" description="Low affinity immunoglobulin gamma Fc region receptor III-A">
    <location>
        <begin position="17"/>
        <end position="250"/>
    </location>
</feature>
<feature type="topological domain" description="Extracellular" evidence="4">
    <location>
        <begin position="17"/>
        <end position="208"/>
    </location>
</feature>
<feature type="transmembrane region" description="Helical" evidence="4">
    <location>
        <begin position="209"/>
        <end position="225"/>
    </location>
</feature>
<feature type="topological domain" description="Cytoplasmic" evidence="4">
    <location>
        <begin position="226"/>
        <end position="250"/>
    </location>
</feature>
<feature type="domain" description="Ig-like C2-type 1">
    <location>
        <begin position="23"/>
        <end position="105"/>
    </location>
</feature>
<feature type="domain" description="Ig-like C2-type 2">
    <location>
        <begin position="99"/>
        <end position="189"/>
    </location>
</feature>
<feature type="site" description="Important for receptor turnover" evidence="2">
    <location>
        <position position="222"/>
    </location>
</feature>
<feature type="glycosylation site" description="N-linked (GlcNAc...) asparagine" evidence="4">
    <location>
        <position position="56"/>
    </location>
</feature>
<feature type="glycosylation site" description="N-linked (GlcNAc...) asparagine" evidence="4">
    <location>
        <position position="63"/>
    </location>
</feature>
<feature type="glycosylation site" description="N-linked (GlcNAc...) asparagine" evidence="4">
    <location>
        <position position="180"/>
    </location>
</feature>
<feature type="disulfide bond" evidence="5">
    <location>
        <begin position="47"/>
        <end position="89"/>
    </location>
</feature>
<feature type="disulfide bond" evidence="5">
    <location>
        <begin position="128"/>
        <end position="172"/>
    </location>
</feature>
<feature type="sequence variant" evidence="6">
    <original>L</original>
    <variation>P</variation>
    <location>
        <position position="11"/>
    </location>
</feature>
<feature type="sequence variant" evidence="6">
    <original>L</original>
    <variation>V</variation>
    <location>
        <position position="12"/>
    </location>
</feature>
<feature type="sequence variant" evidence="6">
    <original>K</original>
    <variation>R</variation>
    <location>
        <position position="46"/>
    </location>
</feature>
<feature type="sequence variant" evidence="6">
    <original>G</original>
    <variation>D</variation>
    <location>
        <position position="107"/>
    </location>
</feature>
<feature type="sequence variant" evidence="6">
    <original>A</original>
    <variation>V</variation>
    <location>
        <position position="114"/>
    </location>
</feature>
<feature type="sequence variant" evidence="6">
    <original>V</original>
    <variation>I</variation>
    <location>
        <position position="229"/>
    </location>
</feature>
<feature type="sequence conflict" description="In Ref. 1; CAA68026." evidence="8" ref="1">
    <original>L</original>
    <variation>P</variation>
    <location>
        <position position="204"/>
    </location>
</feature>
<protein>
    <recommendedName>
        <fullName evidence="2">Low affinity immunoglobulin gamma Fc region receptor III-A</fullName>
        <shortName>IgG Fc receptor III-A</shortName>
    </recommendedName>
    <alternativeName>
        <fullName>Fc-gamma RIII-alpha</fullName>
        <shortName evidence="2">FcgammaRIIIA</shortName>
    </alternativeName>
    <cdAntigenName evidence="2">CD16a</cdAntigenName>
</protein>
<sequence>MWQLLPPAALLLLVSADTQTADPSKAVVLLDPQWNHVLTNDRVTLKCQGDYPVEDNSTKWWHNGTLISSQTPSYFIADVKVQDSGEYKCQTGLSAPSDPVKLEVHVGWLLLQVAQRVVNVGKPIRLKCHSWKKTPVAKVQYFRNGRGKKYSHGNSDFHIPEAKLEHSGSYFCRGIIGSKNESSESVQITVQAPETLQTVSSFFLPWHQITFCLVMGVLFAVDTGLYFSVRRHLQSSEEWRDGKVTWSKGP</sequence>